<comment type="function">
    <text evidence="1">Catalyzes the transfer of a dimethylallyl group onto the adenine at position 37 in tRNAs that read codons beginning with uridine, leading to the formation of N6-(dimethylallyl)adenosine (i(6)A).</text>
</comment>
<comment type="catalytic activity">
    <reaction evidence="1">
        <text>adenosine(37) in tRNA + dimethylallyl diphosphate = N(6)-dimethylallyladenosine(37) in tRNA + diphosphate</text>
        <dbReference type="Rhea" id="RHEA:26482"/>
        <dbReference type="Rhea" id="RHEA-COMP:10162"/>
        <dbReference type="Rhea" id="RHEA-COMP:10375"/>
        <dbReference type="ChEBI" id="CHEBI:33019"/>
        <dbReference type="ChEBI" id="CHEBI:57623"/>
        <dbReference type="ChEBI" id="CHEBI:74411"/>
        <dbReference type="ChEBI" id="CHEBI:74415"/>
        <dbReference type="EC" id="2.5.1.75"/>
    </reaction>
</comment>
<comment type="cofactor">
    <cofactor evidence="1">
        <name>Mg(2+)</name>
        <dbReference type="ChEBI" id="CHEBI:18420"/>
    </cofactor>
</comment>
<comment type="subunit">
    <text evidence="1">Monomer.</text>
</comment>
<comment type="similarity">
    <text evidence="1">Belongs to the IPP transferase family.</text>
</comment>
<proteinExistence type="inferred from homology"/>
<reference key="1">
    <citation type="submission" date="2007-07" db="EMBL/GenBank/DDBJ databases">
        <title>Complete sequence of Fervidobacterium nodosum Rt17-B1.</title>
        <authorList>
            <consortium name="US DOE Joint Genome Institute"/>
            <person name="Copeland A."/>
            <person name="Lucas S."/>
            <person name="Lapidus A."/>
            <person name="Barry K."/>
            <person name="Glavina del Rio T."/>
            <person name="Dalin E."/>
            <person name="Tice H."/>
            <person name="Pitluck S."/>
            <person name="Saunders E."/>
            <person name="Brettin T."/>
            <person name="Bruce D."/>
            <person name="Detter J.C."/>
            <person name="Han C."/>
            <person name="Schmutz J."/>
            <person name="Larimer F."/>
            <person name="Land M."/>
            <person name="Hauser L."/>
            <person name="Kyrpides N."/>
            <person name="Mikhailova N."/>
            <person name="Nelson K."/>
            <person name="Gogarten J.P."/>
            <person name="Noll K."/>
            <person name="Richardson P."/>
        </authorList>
    </citation>
    <scope>NUCLEOTIDE SEQUENCE [LARGE SCALE GENOMIC DNA]</scope>
    <source>
        <strain>ATCC 35602 / DSM 5306 / Rt17-B1</strain>
    </source>
</reference>
<evidence type="ECO:0000255" key="1">
    <source>
        <dbReference type="HAMAP-Rule" id="MF_00185"/>
    </source>
</evidence>
<gene>
    <name evidence="1" type="primary">miaA</name>
    <name type="ordered locus">Fnod_0276</name>
</gene>
<accession>A7HJQ9</accession>
<organism>
    <name type="scientific">Fervidobacterium nodosum (strain ATCC 35602 / DSM 5306 / Rt17-B1)</name>
    <dbReference type="NCBI Taxonomy" id="381764"/>
    <lineage>
        <taxon>Bacteria</taxon>
        <taxon>Thermotogati</taxon>
        <taxon>Thermotogota</taxon>
        <taxon>Thermotogae</taxon>
        <taxon>Thermotogales</taxon>
        <taxon>Fervidobacteriaceae</taxon>
        <taxon>Fervidobacterium</taxon>
    </lineage>
</organism>
<dbReference type="EC" id="2.5.1.75" evidence="1"/>
<dbReference type="EMBL" id="CP000771">
    <property type="protein sequence ID" value="ABS60142.1"/>
    <property type="molecule type" value="Genomic_DNA"/>
</dbReference>
<dbReference type="SMR" id="A7HJQ9"/>
<dbReference type="STRING" id="381764.Fnod_0276"/>
<dbReference type="KEGG" id="fno:Fnod_0276"/>
<dbReference type="eggNOG" id="COG0324">
    <property type="taxonomic scope" value="Bacteria"/>
</dbReference>
<dbReference type="HOGENOM" id="CLU_032616_0_1_0"/>
<dbReference type="OrthoDB" id="9776390at2"/>
<dbReference type="Proteomes" id="UP000002415">
    <property type="component" value="Chromosome"/>
</dbReference>
<dbReference type="GO" id="GO:0005524">
    <property type="term" value="F:ATP binding"/>
    <property type="evidence" value="ECO:0007669"/>
    <property type="project" value="UniProtKB-UniRule"/>
</dbReference>
<dbReference type="GO" id="GO:0052381">
    <property type="term" value="F:tRNA dimethylallyltransferase activity"/>
    <property type="evidence" value="ECO:0007669"/>
    <property type="project" value="UniProtKB-UniRule"/>
</dbReference>
<dbReference type="GO" id="GO:0006400">
    <property type="term" value="P:tRNA modification"/>
    <property type="evidence" value="ECO:0007669"/>
    <property type="project" value="TreeGrafter"/>
</dbReference>
<dbReference type="FunFam" id="1.10.20.140:FF:000001">
    <property type="entry name" value="tRNA dimethylallyltransferase"/>
    <property type="match status" value="1"/>
</dbReference>
<dbReference type="Gene3D" id="1.10.20.140">
    <property type="match status" value="1"/>
</dbReference>
<dbReference type="Gene3D" id="3.40.50.300">
    <property type="entry name" value="P-loop containing nucleotide triphosphate hydrolases"/>
    <property type="match status" value="1"/>
</dbReference>
<dbReference type="HAMAP" id="MF_00185">
    <property type="entry name" value="IPP_trans"/>
    <property type="match status" value="1"/>
</dbReference>
<dbReference type="InterPro" id="IPR039657">
    <property type="entry name" value="Dimethylallyltransferase"/>
</dbReference>
<dbReference type="InterPro" id="IPR018022">
    <property type="entry name" value="IPT"/>
</dbReference>
<dbReference type="InterPro" id="IPR027417">
    <property type="entry name" value="P-loop_NTPase"/>
</dbReference>
<dbReference type="NCBIfam" id="TIGR00174">
    <property type="entry name" value="miaA"/>
    <property type="match status" value="1"/>
</dbReference>
<dbReference type="PANTHER" id="PTHR11088">
    <property type="entry name" value="TRNA DIMETHYLALLYLTRANSFERASE"/>
    <property type="match status" value="1"/>
</dbReference>
<dbReference type="PANTHER" id="PTHR11088:SF60">
    <property type="entry name" value="TRNA DIMETHYLALLYLTRANSFERASE"/>
    <property type="match status" value="1"/>
</dbReference>
<dbReference type="Pfam" id="PF01715">
    <property type="entry name" value="IPPT"/>
    <property type="match status" value="1"/>
</dbReference>
<dbReference type="SUPFAM" id="SSF52540">
    <property type="entry name" value="P-loop containing nucleoside triphosphate hydrolases"/>
    <property type="match status" value="1"/>
</dbReference>
<feature type="chain" id="PRO_0000377161" description="tRNA dimethylallyltransferase">
    <location>
        <begin position="1"/>
        <end position="308"/>
    </location>
</feature>
<feature type="region of interest" description="Interaction with substrate tRNA" evidence="1">
    <location>
        <begin position="35"/>
        <end position="38"/>
    </location>
</feature>
<feature type="binding site" evidence="1">
    <location>
        <begin position="10"/>
        <end position="17"/>
    </location>
    <ligand>
        <name>ATP</name>
        <dbReference type="ChEBI" id="CHEBI:30616"/>
    </ligand>
</feature>
<feature type="binding site" evidence="1">
    <location>
        <begin position="12"/>
        <end position="17"/>
    </location>
    <ligand>
        <name>substrate</name>
    </ligand>
</feature>
<feature type="site" description="Interaction with substrate tRNA" evidence="1">
    <location>
        <position position="101"/>
    </location>
</feature>
<feature type="site" description="Interaction with substrate tRNA" evidence="1">
    <location>
        <position position="123"/>
    </location>
</feature>
<keyword id="KW-0067">ATP-binding</keyword>
<keyword id="KW-0460">Magnesium</keyword>
<keyword id="KW-0547">Nucleotide-binding</keyword>
<keyword id="KW-1185">Reference proteome</keyword>
<keyword id="KW-0808">Transferase</keyword>
<keyword id="KW-0819">tRNA processing</keyword>
<protein>
    <recommendedName>
        <fullName evidence="1">tRNA dimethylallyltransferase</fullName>
        <ecNumber evidence="1">2.5.1.75</ecNumber>
    </recommendedName>
    <alternativeName>
        <fullName evidence="1">Dimethylallyl diphosphate:tRNA dimethylallyltransferase</fullName>
        <shortName evidence="1">DMAPP:tRNA dimethylallyltransferase</shortName>
        <shortName evidence="1">DMATase</shortName>
    </alternativeName>
    <alternativeName>
        <fullName evidence="1">Isopentenyl-diphosphate:tRNA isopentenyltransferase</fullName>
        <shortName evidence="1">IPP transferase</shortName>
        <shortName evidence="1">IPPT</shortName>
        <shortName evidence="1">IPTase</shortName>
    </alternativeName>
</protein>
<name>MIAA_FERNB</name>
<sequence>MNLKRIIISGPTGVGKTDLIVEISKNLPIEVISMDSRQIYKYMDIGTAKPDPYQLMLVKHHMIDIIEPNEYFNAFLYQKMAKEIEKEILLRGKIPIYVGGTGLYIDALVKGFFEGVPRDENIRKELSKLNEQEPGILRKMLEEFDPEAASRIHPQDMKRTIRALEVYLKTGKRISELQKQDKSDDFVLIVLNTDRNILYERINIRAEKMIEHGLIDEVKELIEKYDKTLDTFKTIGYREIIDYLDGIYGLETAIHLIKRNTRHYARRQLIYLRRFKNSLWFDPLHSETKEKIVEIISGVYNELSQKKE</sequence>